<dbReference type="EMBL" id="AE016879">
    <property type="protein sequence ID" value="AAP24974.1"/>
    <property type="molecule type" value="Genomic_DNA"/>
</dbReference>
<dbReference type="EMBL" id="AE017334">
    <property type="protein sequence ID" value="AAT30090.1"/>
    <property type="molecule type" value="Genomic_DNA"/>
</dbReference>
<dbReference type="EMBL" id="AE017225">
    <property type="protein sequence ID" value="AAT53248.1"/>
    <property type="molecule type" value="Genomic_DNA"/>
</dbReference>
<dbReference type="RefSeq" id="NP_843488.1">
    <property type="nucleotide sequence ID" value="NC_003997.3"/>
</dbReference>
<dbReference type="RefSeq" id="WP_000004269.1">
    <property type="nucleotide sequence ID" value="NZ_WXXJ01000020.1"/>
</dbReference>
<dbReference type="RefSeq" id="YP_027197.1">
    <property type="nucleotide sequence ID" value="NC_005945.1"/>
</dbReference>
<dbReference type="SMR" id="Q81U95"/>
<dbReference type="STRING" id="261594.GBAA_0987"/>
<dbReference type="DNASU" id="1087250"/>
<dbReference type="GeneID" id="45021029"/>
<dbReference type="KEGG" id="ban:BA_0987"/>
<dbReference type="KEGG" id="bar:GBAA_0987"/>
<dbReference type="KEGG" id="bat:BAS0923"/>
<dbReference type="PATRIC" id="fig|198094.11.peg.978"/>
<dbReference type="eggNOG" id="COG3237">
    <property type="taxonomic scope" value="Bacteria"/>
</dbReference>
<dbReference type="HOGENOM" id="CLU_135567_3_0_9"/>
<dbReference type="OMA" id="MGNDSVK"/>
<dbReference type="OrthoDB" id="2915699at2"/>
<dbReference type="Proteomes" id="UP000000427">
    <property type="component" value="Chromosome"/>
</dbReference>
<dbReference type="Proteomes" id="UP000000594">
    <property type="component" value="Chromosome"/>
</dbReference>
<dbReference type="Gene3D" id="1.10.1470.10">
    <property type="entry name" value="YjbJ"/>
    <property type="match status" value="1"/>
</dbReference>
<dbReference type="InterPro" id="IPR008462">
    <property type="entry name" value="CsbD"/>
</dbReference>
<dbReference type="InterPro" id="IPR050423">
    <property type="entry name" value="UPF0337_stress_rsp"/>
</dbReference>
<dbReference type="InterPro" id="IPR036629">
    <property type="entry name" value="YjbJ_sf"/>
</dbReference>
<dbReference type="PANTHER" id="PTHR34977">
    <property type="entry name" value="UPF0337 PROTEIN YJBJ"/>
    <property type="match status" value="1"/>
</dbReference>
<dbReference type="PANTHER" id="PTHR34977:SF1">
    <property type="entry name" value="UPF0337 PROTEIN YJBJ"/>
    <property type="match status" value="1"/>
</dbReference>
<dbReference type="Pfam" id="PF05532">
    <property type="entry name" value="CsbD"/>
    <property type="match status" value="1"/>
</dbReference>
<dbReference type="SUPFAM" id="SSF69047">
    <property type="entry name" value="Hypothetical protein YjbJ"/>
    <property type="match status" value="1"/>
</dbReference>
<name>Y987_BACAN</name>
<sequence>MSESGLKEQITGKVEKTKGQVKEGIGEVTEDRKLKNEGKWDKTKGTIKEKVGKVKQKISDGLDNKE</sequence>
<keyword id="KW-1185">Reference proteome</keyword>
<reference key="1">
    <citation type="journal article" date="2003" name="Nature">
        <title>The genome sequence of Bacillus anthracis Ames and comparison to closely related bacteria.</title>
        <authorList>
            <person name="Read T.D."/>
            <person name="Peterson S.N."/>
            <person name="Tourasse N.J."/>
            <person name="Baillie L.W."/>
            <person name="Paulsen I.T."/>
            <person name="Nelson K.E."/>
            <person name="Tettelin H."/>
            <person name="Fouts D.E."/>
            <person name="Eisen J.A."/>
            <person name="Gill S.R."/>
            <person name="Holtzapple E.K."/>
            <person name="Okstad O.A."/>
            <person name="Helgason E."/>
            <person name="Rilstone J."/>
            <person name="Wu M."/>
            <person name="Kolonay J.F."/>
            <person name="Beanan M.J."/>
            <person name="Dodson R.J."/>
            <person name="Brinkac L.M."/>
            <person name="Gwinn M.L."/>
            <person name="DeBoy R.T."/>
            <person name="Madpu R."/>
            <person name="Daugherty S.C."/>
            <person name="Durkin A.S."/>
            <person name="Haft D.H."/>
            <person name="Nelson W.C."/>
            <person name="Peterson J.D."/>
            <person name="Pop M."/>
            <person name="Khouri H.M."/>
            <person name="Radune D."/>
            <person name="Benton J.L."/>
            <person name="Mahamoud Y."/>
            <person name="Jiang L."/>
            <person name="Hance I.R."/>
            <person name="Weidman J.F."/>
            <person name="Berry K.J."/>
            <person name="Plaut R.D."/>
            <person name="Wolf A.M."/>
            <person name="Watkins K.L."/>
            <person name="Nierman W.C."/>
            <person name="Hazen A."/>
            <person name="Cline R.T."/>
            <person name="Redmond C."/>
            <person name="Thwaite J.E."/>
            <person name="White O."/>
            <person name="Salzberg S.L."/>
            <person name="Thomason B."/>
            <person name="Friedlander A.M."/>
            <person name="Koehler T.M."/>
            <person name="Hanna P.C."/>
            <person name="Kolstoe A.-B."/>
            <person name="Fraser C.M."/>
        </authorList>
    </citation>
    <scope>NUCLEOTIDE SEQUENCE [LARGE SCALE GENOMIC DNA]</scope>
    <source>
        <strain>Ames / isolate Porton</strain>
    </source>
</reference>
<reference key="2">
    <citation type="journal article" date="2009" name="J. Bacteriol.">
        <title>The complete genome sequence of Bacillus anthracis Ames 'Ancestor'.</title>
        <authorList>
            <person name="Ravel J."/>
            <person name="Jiang L."/>
            <person name="Stanley S.T."/>
            <person name="Wilson M.R."/>
            <person name="Decker R.S."/>
            <person name="Read T.D."/>
            <person name="Worsham P."/>
            <person name="Keim P.S."/>
            <person name="Salzberg S.L."/>
            <person name="Fraser-Liggett C.M."/>
            <person name="Rasko D.A."/>
        </authorList>
    </citation>
    <scope>NUCLEOTIDE SEQUENCE [LARGE SCALE GENOMIC DNA]</scope>
    <source>
        <strain>Ames ancestor</strain>
    </source>
</reference>
<reference key="3">
    <citation type="submission" date="2004-01" db="EMBL/GenBank/DDBJ databases">
        <title>Complete genome sequence of Bacillus anthracis Sterne.</title>
        <authorList>
            <person name="Brettin T.S."/>
            <person name="Bruce D."/>
            <person name="Challacombe J.F."/>
            <person name="Gilna P."/>
            <person name="Han C."/>
            <person name="Hill K."/>
            <person name="Hitchcock P."/>
            <person name="Jackson P."/>
            <person name="Keim P."/>
            <person name="Longmire J."/>
            <person name="Lucas S."/>
            <person name="Okinaka R."/>
            <person name="Richardson P."/>
            <person name="Rubin E."/>
            <person name="Tice H."/>
        </authorList>
    </citation>
    <scope>NUCLEOTIDE SEQUENCE [LARGE SCALE GENOMIC DNA]</scope>
    <source>
        <strain>Sterne</strain>
    </source>
</reference>
<gene>
    <name type="ordered locus">BA_0987</name>
    <name type="ordered locus">GBAA_0987</name>
    <name type="ordered locus">BAS0923</name>
</gene>
<protein>
    <recommendedName>
        <fullName>UPF0337 protein BA_0987/GBAA_0987/BAS0923</fullName>
    </recommendedName>
</protein>
<organism>
    <name type="scientific">Bacillus anthracis</name>
    <dbReference type="NCBI Taxonomy" id="1392"/>
    <lineage>
        <taxon>Bacteria</taxon>
        <taxon>Bacillati</taxon>
        <taxon>Bacillota</taxon>
        <taxon>Bacilli</taxon>
        <taxon>Bacillales</taxon>
        <taxon>Bacillaceae</taxon>
        <taxon>Bacillus</taxon>
        <taxon>Bacillus cereus group</taxon>
    </lineage>
</organism>
<accession>Q81U95</accession>
<accession>Q6I2I3</accession>
<accession>Q6KWB1</accession>
<evidence type="ECO:0000256" key="1">
    <source>
        <dbReference type="SAM" id="MobiDB-lite"/>
    </source>
</evidence>
<evidence type="ECO:0000305" key="2"/>
<feature type="chain" id="PRO_0000209980" description="UPF0337 protein BA_0987/GBAA_0987/BAS0923">
    <location>
        <begin position="1"/>
        <end position="66"/>
    </location>
</feature>
<feature type="region of interest" description="Disordered" evidence="1">
    <location>
        <begin position="1"/>
        <end position="22"/>
    </location>
</feature>
<feature type="compositionally biased region" description="Basic and acidic residues" evidence="1">
    <location>
        <begin position="13"/>
        <end position="22"/>
    </location>
</feature>
<proteinExistence type="inferred from homology"/>
<comment type="similarity">
    <text evidence="2">Belongs to the UPF0337 (CsbD) family.</text>
</comment>